<feature type="chain" id="PRO_0000441986" description="Probable glutathione S-transferase DHAR1, cytosolic">
    <location>
        <begin position="1"/>
        <end position="213"/>
    </location>
</feature>
<feature type="domain" description="GST N-terminal" evidence="2">
    <location>
        <begin position="10"/>
        <end position="89"/>
    </location>
</feature>
<feature type="domain" description="GST C-terminal" evidence="3">
    <location>
        <begin position="73"/>
        <end position="213"/>
    </location>
</feature>
<feature type="active site" description="Nucleophile" evidence="8">
    <location>
        <position position="20"/>
    </location>
</feature>
<feature type="binding site" evidence="8 18">
    <location>
        <position position="8"/>
    </location>
    <ligand>
        <name>glutathione</name>
        <dbReference type="ChEBI" id="CHEBI:57925"/>
    </ligand>
</feature>
<feature type="binding site" evidence="8 17">
    <location>
        <position position="8"/>
    </location>
    <ligand>
        <name>L-ascorbate</name>
        <dbReference type="ChEBI" id="CHEBI:38290"/>
    </ligand>
</feature>
<feature type="binding site" evidence="8 18">
    <location>
        <position position="19"/>
    </location>
    <ligand>
        <name>glutathione</name>
        <dbReference type="ChEBI" id="CHEBI:57925"/>
    </ligand>
</feature>
<feature type="binding site" evidence="8 17">
    <location>
        <position position="19"/>
    </location>
    <ligand>
        <name>L-ascorbate</name>
        <dbReference type="ChEBI" id="CHEBI:38290"/>
    </ligand>
</feature>
<feature type="binding site" evidence="1">
    <location>
        <position position="47"/>
    </location>
    <ligand>
        <name>glutathione</name>
        <dbReference type="ChEBI" id="CHEBI:57925"/>
    </ligand>
</feature>
<feature type="binding site" evidence="1">
    <location>
        <position position="60"/>
    </location>
    <ligand>
        <name>glutathione</name>
        <dbReference type="ChEBI" id="CHEBI:57925"/>
    </ligand>
</feature>
<feature type="binding site" evidence="1">
    <location>
        <position position="74"/>
    </location>
    <ligand>
        <name>glutathione</name>
        <dbReference type="ChEBI" id="CHEBI:57925"/>
    </ligand>
</feature>
<feature type="binding site" evidence="8 18">
    <location>
        <position position="160"/>
    </location>
    <ligand>
        <name>glutathione</name>
        <dbReference type="ChEBI" id="CHEBI:57925"/>
    </ligand>
</feature>
<feature type="binding site" evidence="8 18">
    <location>
        <position position="207"/>
    </location>
    <ligand>
        <name>glutathione</name>
        <dbReference type="ChEBI" id="CHEBI:57925"/>
    </ligand>
</feature>
<feature type="binding site" evidence="8 17">
    <location>
        <position position="210"/>
    </location>
    <ligand>
        <name>L-ascorbate</name>
        <dbReference type="ChEBI" id="CHEBI:38290"/>
    </ligand>
</feature>
<feature type="mutagenesis site" description="Reduces catalytic activity 3-fold." evidence="8">
    <original>K</original>
    <variation>A</variation>
    <location>
        <position position="8"/>
    </location>
</feature>
<feature type="mutagenesis site" description="Loss of catalytic activity." evidence="8">
    <original>C</original>
    <variation>A</variation>
    <variation>S</variation>
    <location>
        <position position="20"/>
    </location>
</feature>
<feature type="mutagenesis site" description="No effect on catalytic activity." evidence="8">
    <original>K</original>
    <variation>A</variation>
    <location>
        <position position="47"/>
    </location>
</feature>
<feature type="sequence conflict" description="In Ref. 1; BAA90672." evidence="12" ref="1">
    <original>K</original>
    <variation>N</variation>
    <location>
        <position position="47"/>
    </location>
</feature>
<feature type="strand" evidence="20">
    <location>
        <begin position="4"/>
        <end position="10"/>
    </location>
</feature>
<feature type="strand" evidence="20">
    <location>
        <begin position="13"/>
        <end position="17"/>
    </location>
</feature>
<feature type="helix" evidence="20">
    <location>
        <begin position="21"/>
        <end position="33"/>
    </location>
</feature>
<feature type="strand" evidence="20">
    <location>
        <begin position="38"/>
        <end position="42"/>
    </location>
</feature>
<feature type="helix" evidence="20">
    <location>
        <begin position="49"/>
        <end position="54"/>
    </location>
</feature>
<feature type="strand" evidence="20">
    <location>
        <begin position="62"/>
        <end position="64"/>
    </location>
</feature>
<feature type="strand" evidence="20">
    <location>
        <begin position="66"/>
        <end position="68"/>
    </location>
</feature>
<feature type="strand" evidence="19">
    <location>
        <begin position="70"/>
        <end position="72"/>
    </location>
</feature>
<feature type="helix" evidence="20">
    <location>
        <begin position="74"/>
        <end position="84"/>
    </location>
</feature>
<feature type="helix" evidence="20">
    <location>
        <begin position="94"/>
        <end position="96"/>
    </location>
</feature>
<feature type="turn" evidence="20">
    <location>
        <begin position="97"/>
        <end position="102"/>
    </location>
</feature>
<feature type="helix" evidence="20">
    <location>
        <begin position="103"/>
        <end position="112"/>
    </location>
</feature>
<feature type="helix" evidence="20">
    <location>
        <begin position="120"/>
        <end position="138"/>
    </location>
</feature>
<feature type="strand" evidence="19">
    <location>
        <begin position="144"/>
        <end position="146"/>
    </location>
</feature>
<feature type="helix" evidence="20">
    <location>
        <begin position="149"/>
        <end position="169"/>
    </location>
</feature>
<feature type="helix" evidence="20">
    <location>
        <begin position="178"/>
        <end position="188"/>
    </location>
</feature>
<feature type="helix" evidence="20">
    <location>
        <begin position="191"/>
        <end position="196"/>
    </location>
</feature>
<feature type="helix" evidence="20">
    <location>
        <begin position="200"/>
        <end position="211"/>
    </location>
</feature>
<dbReference type="EC" id="2.5.1.18" evidence="12"/>
<dbReference type="EC" id="1.8.5.1" evidence="5"/>
<dbReference type="EMBL" id="AB037970">
    <property type="protein sequence ID" value="BAA90672.1"/>
    <property type="molecule type" value="mRNA"/>
</dbReference>
<dbReference type="EMBL" id="AY074786">
    <property type="protein sequence ID" value="AAL71856.1"/>
    <property type="molecule type" value="mRNA"/>
</dbReference>
<dbReference type="EMBL" id="AC108504">
    <property type="protein sequence ID" value="AAU44087.1"/>
    <property type="molecule type" value="Genomic_DNA"/>
</dbReference>
<dbReference type="EMBL" id="AC078977">
    <property type="protein sequence ID" value="AAV44199.1"/>
    <property type="molecule type" value="Genomic_DNA"/>
</dbReference>
<dbReference type="EMBL" id="AP008211">
    <property type="protein sequence ID" value="BAF16384.1"/>
    <property type="molecule type" value="Genomic_DNA"/>
</dbReference>
<dbReference type="EMBL" id="AP014961">
    <property type="protein sequence ID" value="BAS91971.1"/>
    <property type="molecule type" value="Genomic_DNA"/>
</dbReference>
<dbReference type="EMBL" id="AK061836">
    <property type="protein sequence ID" value="BAG88138.1"/>
    <property type="molecule type" value="mRNA"/>
</dbReference>
<dbReference type="EMBL" id="AK070895">
    <property type="protein sequence ID" value="BAG92197.1"/>
    <property type="molecule type" value="mRNA"/>
</dbReference>
<dbReference type="RefSeq" id="XP_015639454.1">
    <property type="nucleotide sequence ID" value="XM_015783968.1"/>
</dbReference>
<dbReference type="PDB" id="5D9T">
    <property type="method" value="X-ray"/>
    <property type="resolution" value="1.90 A"/>
    <property type="chains" value="A=1-213"/>
</dbReference>
<dbReference type="PDB" id="5D9V">
    <property type="method" value="X-ray"/>
    <property type="resolution" value="1.69 A"/>
    <property type="chains" value="A=1-213"/>
</dbReference>
<dbReference type="PDB" id="5D9W">
    <property type="method" value="X-ray"/>
    <property type="resolution" value="1.69 A"/>
    <property type="chains" value="A=1-213"/>
</dbReference>
<dbReference type="PDB" id="5D9X">
    <property type="method" value="X-ray"/>
    <property type="resolution" value="1.68 A"/>
    <property type="chains" value="A=1-213"/>
</dbReference>
<dbReference type="PDBsum" id="5D9T"/>
<dbReference type="PDBsum" id="5D9V"/>
<dbReference type="PDBsum" id="5D9W"/>
<dbReference type="PDBsum" id="5D9X"/>
<dbReference type="SMR" id="Q65XA0"/>
<dbReference type="FunCoup" id="Q65XA0">
    <property type="interactions" value="1267"/>
</dbReference>
<dbReference type="STRING" id="39947.Q65XA0"/>
<dbReference type="PaxDb" id="39947-Q65XA0"/>
<dbReference type="EnsemblPlants" id="Os05t0116100-01">
    <property type="protein sequence ID" value="Os05t0116100-01"/>
    <property type="gene ID" value="Os05g0116100"/>
</dbReference>
<dbReference type="GeneID" id="4337622"/>
<dbReference type="Gramene" id="Os05t0116100-01">
    <property type="protein sequence ID" value="Os05t0116100-01"/>
    <property type="gene ID" value="Os05g0116100"/>
</dbReference>
<dbReference type="KEGG" id="dosa:Os05g0116100"/>
<dbReference type="KEGG" id="osa:4337622"/>
<dbReference type="eggNOG" id="KOG1422">
    <property type="taxonomic scope" value="Eukaryota"/>
</dbReference>
<dbReference type="HOGENOM" id="CLU_011226_1_0_1"/>
<dbReference type="InParanoid" id="Q65XA0"/>
<dbReference type="OMA" id="LCPPKYA"/>
<dbReference type="BRENDA" id="1.8.5.1">
    <property type="organism ID" value="8948"/>
</dbReference>
<dbReference type="EvolutionaryTrace" id="Q65XA0"/>
<dbReference type="Proteomes" id="UP000000763">
    <property type="component" value="Chromosome 5"/>
</dbReference>
<dbReference type="Proteomes" id="UP000059680">
    <property type="component" value="Chromosome 5"/>
</dbReference>
<dbReference type="GO" id="GO:0005829">
    <property type="term" value="C:cytosol"/>
    <property type="evidence" value="ECO:0007669"/>
    <property type="project" value="UniProtKB-SubCell"/>
</dbReference>
<dbReference type="GO" id="GO:0045174">
    <property type="term" value="F:glutathione dehydrogenase (ascorbate) activity"/>
    <property type="evidence" value="ECO:0000314"/>
    <property type="project" value="UniProtKB"/>
</dbReference>
<dbReference type="GO" id="GO:0004364">
    <property type="term" value="F:glutathione transferase activity"/>
    <property type="evidence" value="ECO:0007669"/>
    <property type="project" value="UniProtKB-EC"/>
</dbReference>
<dbReference type="GO" id="GO:0033355">
    <property type="term" value="P:ascorbate glutathione cycle"/>
    <property type="evidence" value="ECO:0000314"/>
    <property type="project" value="UniProtKB"/>
</dbReference>
<dbReference type="GO" id="GO:0098869">
    <property type="term" value="P:cellular oxidant detoxification"/>
    <property type="evidence" value="ECO:0000314"/>
    <property type="project" value="UniProtKB"/>
</dbReference>
<dbReference type="GO" id="GO:0080151">
    <property type="term" value="P:positive regulation of salicylic acid mediated signaling pathway"/>
    <property type="evidence" value="ECO:0000318"/>
    <property type="project" value="GO_Central"/>
</dbReference>
<dbReference type="CDD" id="cd03201">
    <property type="entry name" value="GST_C_DHAR"/>
    <property type="match status" value="1"/>
</dbReference>
<dbReference type="CDD" id="cd00570">
    <property type="entry name" value="GST_N_family"/>
    <property type="match status" value="1"/>
</dbReference>
<dbReference type="FunFam" id="3.40.30.10:FF:000102">
    <property type="entry name" value="Glutathione S-transferase DHAR3 chloroplastic"/>
    <property type="match status" value="1"/>
</dbReference>
<dbReference type="FunFam" id="1.20.1050.10:FF:000029">
    <property type="entry name" value="Glutathione S-transferase DHAR3, chloroplastic"/>
    <property type="match status" value="1"/>
</dbReference>
<dbReference type="Gene3D" id="1.20.1050.10">
    <property type="match status" value="1"/>
</dbReference>
<dbReference type="Gene3D" id="3.40.30.10">
    <property type="entry name" value="Glutaredoxin"/>
    <property type="match status" value="1"/>
</dbReference>
<dbReference type="InterPro" id="IPR044627">
    <property type="entry name" value="DHAR1/2/3/4"/>
</dbReference>
<dbReference type="InterPro" id="IPR010987">
    <property type="entry name" value="Glutathione-S-Trfase_C-like"/>
</dbReference>
<dbReference type="InterPro" id="IPR036282">
    <property type="entry name" value="Glutathione-S-Trfase_C_sf"/>
</dbReference>
<dbReference type="InterPro" id="IPR040079">
    <property type="entry name" value="Glutathione_S-Trfase"/>
</dbReference>
<dbReference type="InterPro" id="IPR004045">
    <property type="entry name" value="Glutathione_S-Trfase_N"/>
</dbReference>
<dbReference type="InterPro" id="IPR036249">
    <property type="entry name" value="Thioredoxin-like_sf"/>
</dbReference>
<dbReference type="PANTHER" id="PTHR44420">
    <property type="entry name" value="GLUTATHIONE S-TRANSFERASE DHAR2-RELATED"/>
    <property type="match status" value="1"/>
</dbReference>
<dbReference type="PANTHER" id="PTHR44420:SF2">
    <property type="entry name" value="GLUTATHIONE S-TRANSFERASE DHAR2-RELATED"/>
    <property type="match status" value="1"/>
</dbReference>
<dbReference type="Pfam" id="PF13410">
    <property type="entry name" value="GST_C_2"/>
    <property type="match status" value="1"/>
</dbReference>
<dbReference type="Pfam" id="PF13417">
    <property type="entry name" value="GST_N_3"/>
    <property type="match status" value="1"/>
</dbReference>
<dbReference type="SFLD" id="SFLDS00019">
    <property type="entry name" value="Glutathione_Transferase_(cytos"/>
    <property type="match status" value="1"/>
</dbReference>
<dbReference type="SFLD" id="SFLDG00358">
    <property type="entry name" value="Main_(cytGST)"/>
    <property type="match status" value="1"/>
</dbReference>
<dbReference type="SUPFAM" id="SSF47616">
    <property type="entry name" value="GST C-terminal domain-like"/>
    <property type="match status" value="1"/>
</dbReference>
<dbReference type="SUPFAM" id="SSF52833">
    <property type="entry name" value="Thioredoxin-like"/>
    <property type="match status" value="1"/>
</dbReference>
<dbReference type="PROSITE" id="PS50405">
    <property type="entry name" value="GST_CTER"/>
    <property type="match status" value="1"/>
</dbReference>
<dbReference type="PROSITE" id="PS50404">
    <property type="entry name" value="GST_NTER"/>
    <property type="match status" value="1"/>
</dbReference>
<name>DHAR1_ORYSJ</name>
<comment type="function">
    <text evidence="5 8 13">Involved in ascorbate homeostasis. Maintains redox pools of ascorbate by recycling dihydroascorbate (DHA) to ascorbate (Probable). Involved in scavenging reactive oxygen species (ROS) under oxidative stresses. Possesses dehydroascorbate reductase (DHAR) activity in vitro (PubMed:19011360). May function via a ping-pong reaction mechanism with an electron transfer at the active site (PubMed:26775680). Possesses chaperone-like activity in vitro (PubMed:26775680).</text>
</comment>
<comment type="catalytic activity">
    <reaction evidence="12">
        <text>RX + glutathione = an S-substituted glutathione + a halide anion + H(+)</text>
        <dbReference type="Rhea" id="RHEA:16437"/>
        <dbReference type="ChEBI" id="CHEBI:15378"/>
        <dbReference type="ChEBI" id="CHEBI:16042"/>
        <dbReference type="ChEBI" id="CHEBI:17792"/>
        <dbReference type="ChEBI" id="CHEBI:57925"/>
        <dbReference type="ChEBI" id="CHEBI:90779"/>
        <dbReference type="EC" id="2.5.1.18"/>
    </reaction>
</comment>
<comment type="catalytic activity">
    <reaction evidence="5">
        <text>L-dehydroascorbate + 2 glutathione = glutathione disulfide + L-ascorbate</text>
        <dbReference type="Rhea" id="RHEA:24424"/>
        <dbReference type="ChEBI" id="CHEBI:38290"/>
        <dbReference type="ChEBI" id="CHEBI:57925"/>
        <dbReference type="ChEBI" id="CHEBI:58297"/>
        <dbReference type="ChEBI" id="CHEBI:58539"/>
        <dbReference type="EC" id="1.8.5.1"/>
    </reaction>
</comment>
<comment type="subunit">
    <text evidence="8">Monomer.</text>
</comment>
<comment type="subcellular location">
    <subcellularLocation>
        <location evidence="12">Cytoplasm</location>
        <location evidence="12">Cytosol</location>
    </subcellularLocation>
</comment>
<comment type="induction">
    <text evidence="4 7">Induced by heat shock (PubMed:10648822). Down-regulated during senescence (PubMed:25546583).</text>
</comment>
<comment type="biotechnology">
    <text evidence="6">Overexpression of DHAR1 improve ascorbate pool and redox homeostasis, and enhances grain yield and biomass in paddy field conditions.</text>
</comment>
<comment type="similarity">
    <text evidence="12">Belongs to the GST superfamily. DHAR family.</text>
</comment>
<accession>Q65XA0</accession>
<accession>Q84UH5</accession>
<accession>Q9MB31</accession>
<organism>
    <name type="scientific">Oryza sativa subsp. japonica</name>
    <name type="common">Rice</name>
    <dbReference type="NCBI Taxonomy" id="39947"/>
    <lineage>
        <taxon>Eukaryota</taxon>
        <taxon>Viridiplantae</taxon>
        <taxon>Streptophyta</taxon>
        <taxon>Embryophyta</taxon>
        <taxon>Tracheophyta</taxon>
        <taxon>Spermatophyta</taxon>
        <taxon>Magnoliopsida</taxon>
        <taxon>Liliopsida</taxon>
        <taxon>Poales</taxon>
        <taxon>Poaceae</taxon>
        <taxon>BOP clade</taxon>
        <taxon>Oryzoideae</taxon>
        <taxon>Oryzeae</taxon>
        <taxon>Oryzinae</taxon>
        <taxon>Oryza</taxon>
        <taxon>Oryza sativa</taxon>
    </lineage>
</organism>
<evidence type="ECO:0000250" key="1">
    <source>
        <dbReference type="UniProtKB" id="Q9FWR4"/>
    </source>
</evidence>
<evidence type="ECO:0000255" key="2">
    <source>
        <dbReference type="PROSITE-ProRule" id="PRU00684"/>
    </source>
</evidence>
<evidence type="ECO:0000255" key="3">
    <source>
        <dbReference type="PROSITE-ProRule" id="PRU00685"/>
    </source>
</evidence>
<evidence type="ECO:0000269" key="4">
    <source>
    </source>
</evidence>
<evidence type="ECO:0000269" key="5">
    <source>
    </source>
</evidence>
<evidence type="ECO:0000269" key="6">
    <source>
    </source>
</evidence>
<evidence type="ECO:0000269" key="7">
    <source>
    </source>
</evidence>
<evidence type="ECO:0000269" key="8">
    <source>
    </source>
</evidence>
<evidence type="ECO:0000303" key="9">
    <source>
    </source>
</evidence>
<evidence type="ECO:0000303" key="10">
    <source>
    </source>
</evidence>
<evidence type="ECO:0000303" key="11">
    <source>
    </source>
</evidence>
<evidence type="ECO:0000305" key="12"/>
<evidence type="ECO:0000305" key="13">
    <source>
    </source>
</evidence>
<evidence type="ECO:0000312" key="14">
    <source>
        <dbReference type="EMBL" id="AAU44087.1"/>
    </source>
</evidence>
<evidence type="ECO:0000312" key="15">
    <source>
        <dbReference type="EMBL" id="AAV44199.1"/>
    </source>
</evidence>
<evidence type="ECO:0000312" key="16">
    <source>
        <dbReference type="EMBL" id="BAF16384.1"/>
    </source>
</evidence>
<evidence type="ECO:0007744" key="17">
    <source>
        <dbReference type="PDB" id="5D9W"/>
    </source>
</evidence>
<evidence type="ECO:0007744" key="18">
    <source>
        <dbReference type="PDB" id="5D9X"/>
    </source>
</evidence>
<evidence type="ECO:0007829" key="19">
    <source>
        <dbReference type="PDB" id="5D9W"/>
    </source>
</evidence>
<evidence type="ECO:0007829" key="20">
    <source>
        <dbReference type="PDB" id="5D9X"/>
    </source>
</evidence>
<keyword id="KW-0002">3D-structure</keyword>
<keyword id="KW-0963">Cytoplasm</keyword>
<keyword id="KW-0216">Detoxification</keyword>
<keyword id="KW-0903">Direct protein sequencing</keyword>
<keyword id="KW-0560">Oxidoreductase</keyword>
<keyword id="KW-1185">Reference proteome</keyword>
<keyword id="KW-0346">Stress response</keyword>
<keyword id="KW-0808">Transferase</keyword>
<sequence length="213" mass="23570">MGVEVCVKAAVGHPDTLGDCPFSQRVLLTLEEKKVPYEMKLIDVQNKPDWFLKISPEGKVPVFNGGDGKWIPDSDVITQVIEEKYPTPSLVTPPEYASVGSKIFSCFTTFLKSKDPNDGSEKALLTELQALEEHLKAHGPFINGQNISAADLSLAPKLYHLQVALEHFKGWKIPEDLTNVHAYTEALFSRESFIKTKAAKEHLIAGWAPKVNA</sequence>
<gene>
    <name evidence="11" type="primary">DHAR1</name>
    <name evidence="10" type="synonym">DHAR</name>
    <name evidence="16" type="ordered locus">Os05g0116100</name>
    <name evidence="12" type="ordered locus">LOC_Os05g02530</name>
    <name evidence="14" type="ORF">OJ1654_B10.18</name>
    <name evidence="15" type="ORF">P0496H07.8</name>
</gene>
<proteinExistence type="evidence at protein level"/>
<reference key="1">
    <citation type="journal article" date="2000" name="FEBS Lett.">
        <title>Molecular cloning and characterization of a rice dehydroascorbate reductase.</title>
        <authorList>
            <person name="Urano J."/>
            <person name="Nakagawa T."/>
            <person name="Maki Y."/>
            <person name="Masumura T."/>
            <person name="Tanaka K."/>
            <person name="Murata N."/>
            <person name="Ushimaru T."/>
        </authorList>
    </citation>
    <scope>NUCLEOTIDE SEQUENCE [MRNA]</scope>
    <scope>PROTEIN SEQUENCE OF 2-15; 84-100 AND 128-147</scope>
    <scope>INDUCTION BY HEAT SHOCK</scope>
    <source>
        <strain>cv. Nipponbare</strain>
    </source>
</reference>
<reference key="2">
    <citation type="journal article" date="2003" name="Proc. Natl. Acad. Sci. U.S.A.">
        <title>Increasing vitamin C content of plants through enhanced ascorbate recycling.</title>
        <authorList>
            <person name="Chen Z."/>
            <person name="Young T.E."/>
            <person name="Ling J."/>
            <person name="Chang S.C."/>
            <person name="Gallie D.R."/>
        </authorList>
    </citation>
    <scope>NUCLEOTIDE SEQUENCE [MRNA]</scope>
</reference>
<reference key="3">
    <citation type="journal article" date="2005" name="Mol. Genet. Genomics">
        <title>A fine physical map of the rice chromosome 5.</title>
        <authorList>
            <person name="Cheng C.-H."/>
            <person name="Chung M.C."/>
            <person name="Liu S.-M."/>
            <person name="Chen S.-K."/>
            <person name="Kao F.Y."/>
            <person name="Lin S.-J."/>
            <person name="Hsiao S.-H."/>
            <person name="Tseng I.C."/>
            <person name="Hsing Y.-I.C."/>
            <person name="Wu H.-P."/>
            <person name="Chen C.-S."/>
            <person name="Shaw J.-F."/>
            <person name="Wu J."/>
            <person name="Matsumoto T."/>
            <person name="Sasaki T."/>
            <person name="Chen H.-C."/>
            <person name="Chow T.-Y."/>
        </authorList>
    </citation>
    <scope>NUCLEOTIDE SEQUENCE [LARGE SCALE GENOMIC DNA]</scope>
    <source>
        <strain>cv. Nipponbare</strain>
    </source>
</reference>
<reference key="4">
    <citation type="journal article" date="2005" name="Nature">
        <title>The map-based sequence of the rice genome.</title>
        <authorList>
            <consortium name="International rice genome sequencing project (IRGSP)"/>
        </authorList>
    </citation>
    <scope>NUCLEOTIDE SEQUENCE [LARGE SCALE GENOMIC DNA]</scope>
    <source>
        <strain>cv. Nipponbare</strain>
    </source>
</reference>
<reference key="5">
    <citation type="journal article" date="2008" name="Nucleic Acids Res.">
        <title>The rice annotation project database (RAP-DB): 2008 update.</title>
        <authorList>
            <consortium name="The rice annotation project (RAP)"/>
        </authorList>
    </citation>
    <scope>GENOME REANNOTATION</scope>
    <source>
        <strain>cv. Nipponbare</strain>
    </source>
</reference>
<reference key="6">
    <citation type="journal article" date="2013" name="Rice">
        <title>Improvement of the Oryza sativa Nipponbare reference genome using next generation sequence and optical map data.</title>
        <authorList>
            <person name="Kawahara Y."/>
            <person name="de la Bastide M."/>
            <person name="Hamilton J.P."/>
            <person name="Kanamori H."/>
            <person name="McCombie W.R."/>
            <person name="Ouyang S."/>
            <person name="Schwartz D.C."/>
            <person name="Tanaka T."/>
            <person name="Wu J."/>
            <person name="Zhou S."/>
            <person name="Childs K.L."/>
            <person name="Davidson R.M."/>
            <person name="Lin H."/>
            <person name="Quesada-Ocampo L."/>
            <person name="Vaillancourt B."/>
            <person name="Sakai H."/>
            <person name="Lee S.S."/>
            <person name="Kim J."/>
            <person name="Numa H."/>
            <person name="Itoh T."/>
            <person name="Buell C.R."/>
            <person name="Matsumoto T."/>
        </authorList>
    </citation>
    <scope>GENOME REANNOTATION</scope>
    <source>
        <strain>cv. Nipponbare</strain>
    </source>
</reference>
<reference key="7">
    <citation type="journal article" date="2003" name="Science">
        <title>Collection, mapping, and annotation of over 28,000 cDNA clones from japonica rice.</title>
        <authorList>
            <consortium name="The rice full-length cDNA consortium"/>
        </authorList>
    </citation>
    <scope>NUCLEOTIDE SEQUENCE [LARGE SCALE MRNA]</scope>
    <source>
        <strain>cv. Nipponbare</strain>
    </source>
</reference>
<reference key="8">
    <citation type="journal article" date="2008" name="Mol. Cells">
        <title>Scavenging reactive oxygen species by rice dehydroascorbate reductase alleviates oxidative stresses in Escherichia coli.</title>
        <authorList>
            <person name="Shin S.Y."/>
            <person name="Kim I.S."/>
            <person name="Kim Y.H."/>
            <person name="Park H.M."/>
            <person name="Lee J.Y."/>
            <person name="Kang H.G."/>
            <person name="Yoon H.S."/>
        </authorList>
    </citation>
    <scope>FUNCTION</scope>
    <scope>CATALYTIC ACTIVITY</scope>
</reference>
<reference key="9">
    <citation type="journal article" date="2010" name="BMC Genomics">
        <title>Comprehensive expression analysis suggests overlapping and specific roles of rice glutathione S-transferase genes during development and stress responses.</title>
        <authorList>
            <person name="Jain M."/>
            <person name="Ghanashyam C."/>
            <person name="Bhattacharjee A."/>
        </authorList>
    </citation>
    <scope>GENE FAMILY</scope>
    <scope>NOMENCLATURE</scope>
</reference>
<reference key="10">
    <citation type="journal article" date="2013" name="Planta">
        <title>Homologous expression of cytosolic dehydroascorbate reductase increases grain yield and biomass under paddy field conditions in transgenic rice (Oryza sativa L. japonica).</title>
        <authorList>
            <person name="Kim Y.S."/>
            <person name="Kim I.S."/>
            <person name="Bae M.J."/>
            <person name="Choe Y.H."/>
            <person name="Kim Y.H."/>
            <person name="Park H.M."/>
            <person name="Kang H.G."/>
            <person name="Yoon H.S."/>
        </authorList>
    </citation>
    <scope>FUNCTION</scope>
    <scope>BIOTECHNOLOGY</scope>
</reference>
<reference key="11">
    <citation type="journal article" date="2015" name="J. Plant Physiol.">
        <title>Transcriptional profile of genes involved in ascorbate glutathione cycle in senescing leaves for an early senescence leaf (esl) rice mutant.</title>
        <authorList>
            <person name="Li Z."/>
            <person name="Su D."/>
            <person name="Lei B."/>
            <person name="Wang F."/>
            <person name="Geng W."/>
            <person name="Pan G."/>
            <person name="Cheng F."/>
        </authorList>
    </citation>
    <scope>INDUCTION</scope>
</reference>
<reference key="12">
    <citation type="journal article" date="2016" name="Sci. Rep.">
        <title>Structural understanding of the recycling of oxidized ascorbate by dehydroascorbate reductase (OsDHAR) from Oryza sativa L. japonica.</title>
        <authorList>
            <person name="Do H."/>
            <person name="Kim I.S."/>
            <person name="Jeon B.W."/>
            <person name="Lee C.W."/>
            <person name="Park A.K."/>
            <person name="Wi A.R."/>
            <person name="Shin S.C."/>
            <person name="Park H."/>
            <person name="Kim Y.S."/>
            <person name="Yoon H.S."/>
            <person name="Kim H.W."/>
            <person name="Lee J.H."/>
        </authorList>
    </citation>
    <scope>X-RAY CRYSTALLOGRAPHY (1.68 ANGSTROMS) IN COMPLEX WITH ASCORBATE AND GLUTATHIONE</scope>
    <scope>FUNCTION</scope>
    <scope>ACTIVE SITE</scope>
    <scope>SUBUNIT</scope>
    <scope>MUTAGENESIS OF LYS-8; CYS-20 AND LYS-47</scope>
</reference>
<protein>
    <recommendedName>
        <fullName evidence="12">Probable glutathione S-transferase DHAR1, cytosolic</fullName>
        <ecNumber evidence="12">2.5.1.18</ecNumber>
    </recommendedName>
    <alternativeName>
        <fullName evidence="9">GSH-dependent dehydroascorbate reductase 1</fullName>
        <shortName evidence="11">OsDHAR1</shortName>
        <ecNumber evidence="5">1.8.5.1</ecNumber>
    </alternativeName>
    <alternativeName>
        <fullName evidence="12">Glutathione-dependent dehydroascorbate reductase 1</fullName>
    </alternativeName>
</protein>